<sequence>MSKVAIIDFGSQFTQLLARRIRDLNIYSEIFLPNVAFDLIKGVDAFILSGGPRSVPNSDGIPKIVHDILQFNEKTSIPVLGICYGLQILSNYFESDVVSNCNKEFGKTILNIIKNSKIIENIWESGDQAYVWMSHADSVYNIPRGFEVIAYSVLNNSIAMVANEQRRIYGMQFHPEVYHTPDGINLLANFLDIAGCQKDWTVTSFIDDQQDAIKKQIGNKKVIAALSGGVDSSVAAALTYKAIGDQLHCVFIDNGLLRYNEVEKVKQLFINELKIPVTIVDKSAVFLNRLKSITDPERKRKIIGETFIEIFEEEANKLEGVEFLMQGTIYPDVVESGGSGSIAKESVVIKSHHNVGGLPKTMKFKLVEPLKYLFKDEVRILGRNLGISTEILMRHPFPGPGLAVRIIGEITEEKVKMLQAADDIYINLIKKYELYDVMWQAFVVLLPVKTVGVMGDRRTYGHACVLRAVNSHDGMTAESFPFCMDEETQWKFFKCIQEASNAIINSVNGINRVAYDITSKPPATIEWE</sequence>
<accession>Q5FF75</accession>
<evidence type="ECO:0000255" key="1">
    <source>
        <dbReference type="HAMAP-Rule" id="MF_00344"/>
    </source>
</evidence>
<dbReference type="EC" id="6.3.5.2" evidence="1"/>
<dbReference type="EMBL" id="CR925677">
    <property type="protein sequence ID" value="CAI27517.1"/>
    <property type="molecule type" value="Genomic_DNA"/>
</dbReference>
<dbReference type="RefSeq" id="WP_011255266.1">
    <property type="nucleotide sequence ID" value="NC_006831.1"/>
</dbReference>
<dbReference type="SMR" id="Q5FF75"/>
<dbReference type="KEGG" id="erg:ERGA_CDS_00650"/>
<dbReference type="HOGENOM" id="CLU_014340_0_5_5"/>
<dbReference type="OrthoDB" id="9802219at2"/>
<dbReference type="UniPathway" id="UPA00189">
    <property type="reaction ID" value="UER00296"/>
</dbReference>
<dbReference type="Proteomes" id="UP000000533">
    <property type="component" value="Chromosome"/>
</dbReference>
<dbReference type="GO" id="GO:0005829">
    <property type="term" value="C:cytosol"/>
    <property type="evidence" value="ECO:0007669"/>
    <property type="project" value="TreeGrafter"/>
</dbReference>
<dbReference type="GO" id="GO:0005524">
    <property type="term" value="F:ATP binding"/>
    <property type="evidence" value="ECO:0007669"/>
    <property type="project" value="UniProtKB-UniRule"/>
</dbReference>
<dbReference type="GO" id="GO:0003921">
    <property type="term" value="F:GMP synthase activity"/>
    <property type="evidence" value="ECO:0007669"/>
    <property type="project" value="InterPro"/>
</dbReference>
<dbReference type="CDD" id="cd01742">
    <property type="entry name" value="GATase1_GMP_Synthase"/>
    <property type="match status" value="1"/>
</dbReference>
<dbReference type="CDD" id="cd01997">
    <property type="entry name" value="GMP_synthase_C"/>
    <property type="match status" value="1"/>
</dbReference>
<dbReference type="FunFam" id="3.30.300.10:FF:000002">
    <property type="entry name" value="GMP synthase [glutamine-hydrolyzing]"/>
    <property type="match status" value="1"/>
</dbReference>
<dbReference type="FunFam" id="3.40.50.620:FF:000001">
    <property type="entry name" value="GMP synthase [glutamine-hydrolyzing]"/>
    <property type="match status" value="1"/>
</dbReference>
<dbReference type="Gene3D" id="3.30.300.10">
    <property type="match status" value="1"/>
</dbReference>
<dbReference type="Gene3D" id="3.40.50.880">
    <property type="match status" value="1"/>
</dbReference>
<dbReference type="Gene3D" id="3.40.50.620">
    <property type="entry name" value="HUPs"/>
    <property type="match status" value="1"/>
</dbReference>
<dbReference type="HAMAP" id="MF_00344">
    <property type="entry name" value="GMP_synthase"/>
    <property type="match status" value="1"/>
</dbReference>
<dbReference type="InterPro" id="IPR029062">
    <property type="entry name" value="Class_I_gatase-like"/>
</dbReference>
<dbReference type="InterPro" id="IPR017926">
    <property type="entry name" value="GATASE"/>
</dbReference>
<dbReference type="InterPro" id="IPR001674">
    <property type="entry name" value="GMP_synth_C"/>
</dbReference>
<dbReference type="InterPro" id="IPR004739">
    <property type="entry name" value="GMP_synth_GATase"/>
</dbReference>
<dbReference type="InterPro" id="IPR022955">
    <property type="entry name" value="GMP_synthase"/>
</dbReference>
<dbReference type="InterPro" id="IPR025777">
    <property type="entry name" value="GMPS_ATP_PPase_dom"/>
</dbReference>
<dbReference type="InterPro" id="IPR022310">
    <property type="entry name" value="NAD/GMP_synthase"/>
</dbReference>
<dbReference type="InterPro" id="IPR014729">
    <property type="entry name" value="Rossmann-like_a/b/a_fold"/>
</dbReference>
<dbReference type="NCBIfam" id="TIGR00884">
    <property type="entry name" value="guaA_Cterm"/>
    <property type="match status" value="1"/>
</dbReference>
<dbReference type="NCBIfam" id="TIGR00888">
    <property type="entry name" value="guaA_Nterm"/>
    <property type="match status" value="1"/>
</dbReference>
<dbReference type="NCBIfam" id="NF000848">
    <property type="entry name" value="PRK00074.1"/>
    <property type="match status" value="1"/>
</dbReference>
<dbReference type="PANTHER" id="PTHR11922:SF2">
    <property type="entry name" value="GMP SYNTHASE [GLUTAMINE-HYDROLYZING]"/>
    <property type="match status" value="1"/>
</dbReference>
<dbReference type="PANTHER" id="PTHR11922">
    <property type="entry name" value="GMP SYNTHASE-RELATED"/>
    <property type="match status" value="1"/>
</dbReference>
<dbReference type="Pfam" id="PF00117">
    <property type="entry name" value="GATase"/>
    <property type="match status" value="1"/>
</dbReference>
<dbReference type="Pfam" id="PF00958">
    <property type="entry name" value="GMP_synt_C"/>
    <property type="match status" value="1"/>
</dbReference>
<dbReference type="Pfam" id="PF02540">
    <property type="entry name" value="NAD_synthase"/>
    <property type="match status" value="1"/>
</dbReference>
<dbReference type="PRINTS" id="PR00097">
    <property type="entry name" value="ANTSNTHASEII"/>
</dbReference>
<dbReference type="PRINTS" id="PR00096">
    <property type="entry name" value="GATASE"/>
</dbReference>
<dbReference type="SUPFAM" id="SSF52402">
    <property type="entry name" value="Adenine nucleotide alpha hydrolases-like"/>
    <property type="match status" value="1"/>
</dbReference>
<dbReference type="SUPFAM" id="SSF52317">
    <property type="entry name" value="Class I glutamine amidotransferase-like"/>
    <property type="match status" value="1"/>
</dbReference>
<dbReference type="SUPFAM" id="SSF54810">
    <property type="entry name" value="GMP synthetase C-terminal dimerisation domain"/>
    <property type="match status" value="1"/>
</dbReference>
<dbReference type="PROSITE" id="PS51273">
    <property type="entry name" value="GATASE_TYPE_1"/>
    <property type="match status" value="1"/>
</dbReference>
<dbReference type="PROSITE" id="PS51553">
    <property type="entry name" value="GMPS_ATP_PPASE"/>
    <property type="match status" value="1"/>
</dbReference>
<comment type="function">
    <text evidence="1">Catalyzes the synthesis of GMP from XMP.</text>
</comment>
<comment type="catalytic activity">
    <reaction evidence="1">
        <text>XMP + L-glutamine + ATP + H2O = GMP + L-glutamate + AMP + diphosphate + 2 H(+)</text>
        <dbReference type="Rhea" id="RHEA:11680"/>
        <dbReference type="ChEBI" id="CHEBI:15377"/>
        <dbReference type="ChEBI" id="CHEBI:15378"/>
        <dbReference type="ChEBI" id="CHEBI:29985"/>
        <dbReference type="ChEBI" id="CHEBI:30616"/>
        <dbReference type="ChEBI" id="CHEBI:33019"/>
        <dbReference type="ChEBI" id="CHEBI:57464"/>
        <dbReference type="ChEBI" id="CHEBI:58115"/>
        <dbReference type="ChEBI" id="CHEBI:58359"/>
        <dbReference type="ChEBI" id="CHEBI:456215"/>
        <dbReference type="EC" id="6.3.5.2"/>
    </reaction>
</comment>
<comment type="pathway">
    <text evidence="1">Purine metabolism; GMP biosynthesis; GMP from XMP (L-Gln route): step 1/1.</text>
</comment>
<comment type="subunit">
    <text evidence="1">Homodimer.</text>
</comment>
<gene>
    <name evidence="1" type="primary">guaA</name>
    <name type="ordered locus">ERGA_CDS_00650</name>
</gene>
<protein>
    <recommendedName>
        <fullName evidence="1">GMP synthase [glutamine-hydrolyzing]</fullName>
        <ecNumber evidence="1">6.3.5.2</ecNumber>
    </recommendedName>
    <alternativeName>
        <fullName evidence="1">GMP synthetase</fullName>
    </alternativeName>
    <alternativeName>
        <fullName evidence="1">Glutamine amidotransferase</fullName>
    </alternativeName>
</protein>
<name>GUAA_EHRRG</name>
<reference key="1">
    <citation type="journal article" date="2006" name="J. Bacteriol.">
        <title>Comparative genomic analysis of three strains of Ehrlichia ruminantium reveals an active process of genome size plasticity.</title>
        <authorList>
            <person name="Frutos R."/>
            <person name="Viari A."/>
            <person name="Ferraz C."/>
            <person name="Morgat A."/>
            <person name="Eychenie S."/>
            <person name="Kandassamy Y."/>
            <person name="Chantal I."/>
            <person name="Bensaid A."/>
            <person name="Coissac E."/>
            <person name="Vachiery N."/>
            <person name="Demaille J."/>
            <person name="Martinez D."/>
        </authorList>
    </citation>
    <scope>NUCLEOTIDE SEQUENCE [LARGE SCALE GENOMIC DNA]</scope>
    <source>
        <strain>Gardel</strain>
    </source>
</reference>
<feature type="chain" id="PRO_0000229426" description="GMP synthase [glutamine-hydrolyzing]">
    <location>
        <begin position="1"/>
        <end position="528"/>
    </location>
</feature>
<feature type="domain" description="Glutamine amidotransferase type-1" evidence="1">
    <location>
        <begin position="3"/>
        <end position="199"/>
    </location>
</feature>
<feature type="domain" description="GMPS ATP-PPase" evidence="1">
    <location>
        <begin position="200"/>
        <end position="394"/>
    </location>
</feature>
<feature type="active site" description="Nucleophile" evidence="1">
    <location>
        <position position="83"/>
    </location>
</feature>
<feature type="active site" evidence="1">
    <location>
        <position position="174"/>
    </location>
</feature>
<feature type="active site" evidence="1">
    <location>
        <position position="176"/>
    </location>
</feature>
<feature type="binding site" evidence="1">
    <location>
        <begin position="227"/>
        <end position="233"/>
    </location>
    <ligand>
        <name>ATP</name>
        <dbReference type="ChEBI" id="CHEBI:30616"/>
    </ligand>
</feature>
<keyword id="KW-0067">ATP-binding</keyword>
<keyword id="KW-0315">Glutamine amidotransferase</keyword>
<keyword id="KW-0332">GMP biosynthesis</keyword>
<keyword id="KW-0436">Ligase</keyword>
<keyword id="KW-0547">Nucleotide-binding</keyword>
<keyword id="KW-0658">Purine biosynthesis</keyword>
<organism>
    <name type="scientific">Ehrlichia ruminantium (strain Gardel)</name>
    <dbReference type="NCBI Taxonomy" id="302409"/>
    <lineage>
        <taxon>Bacteria</taxon>
        <taxon>Pseudomonadati</taxon>
        <taxon>Pseudomonadota</taxon>
        <taxon>Alphaproteobacteria</taxon>
        <taxon>Rickettsiales</taxon>
        <taxon>Anaplasmataceae</taxon>
        <taxon>Ehrlichia</taxon>
    </lineage>
</organism>
<proteinExistence type="inferred from homology"/>